<organism>
    <name type="scientific">Pyrococcus abyssi (strain GE5 / Orsay)</name>
    <dbReference type="NCBI Taxonomy" id="272844"/>
    <lineage>
        <taxon>Archaea</taxon>
        <taxon>Methanobacteriati</taxon>
        <taxon>Methanobacteriota</taxon>
        <taxon>Thermococci</taxon>
        <taxon>Thermococcales</taxon>
        <taxon>Thermococcaceae</taxon>
        <taxon>Pyrococcus</taxon>
    </lineage>
</organism>
<name>HYPA_PYRAB</name>
<proteinExistence type="inferred from homology"/>
<feature type="chain" id="PRO_0000129082" description="Hydrogenase maturation factor HypA">
    <location>
        <begin position="1"/>
        <end position="139"/>
    </location>
</feature>
<feature type="binding site" evidence="1">
    <location>
        <position position="2"/>
    </location>
    <ligand>
        <name>Ni(2+)</name>
        <dbReference type="ChEBI" id="CHEBI:49786"/>
    </ligand>
</feature>
<feature type="binding site" evidence="1">
    <location>
        <position position="73"/>
    </location>
    <ligand>
        <name>Zn(2+)</name>
        <dbReference type="ChEBI" id="CHEBI:29105"/>
    </ligand>
</feature>
<feature type="binding site" evidence="1">
    <location>
        <position position="76"/>
    </location>
    <ligand>
        <name>Zn(2+)</name>
        <dbReference type="ChEBI" id="CHEBI:29105"/>
    </ligand>
</feature>
<feature type="binding site" evidence="1">
    <location>
        <position position="110"/>
    </location>
    <ligand>
        <name>Zn(2+)</name>
        <dbReference type="ChEBI" id="CHEBI:29105"/>
    </ligand>
</feature>
<feature type="binding site" evidence="1">
    <location>
        <position position="113"/>
    </location>
    <ligand>
        <name>Zn(2+)</name>
        <dbReference type="ChEBI" id="CHEBI:29105"/>
    </ligand>
</feature>
<keyword id="KW-0479">Metal-binding</keyword>
<keyword id="KW-0533">Nickel</keyword>
<keyword id="KW-0862">Zinc</keyword>
<sequence>MHEWALADAIVRTALDYAQKENASKILAIKVVLGELQDVNAEVVEFAMKELLRGTIGEGAEIIFEEEEAVFRCRNCGHEWKLKEVKDKLDERIREDIHFIPEVVHAFISCPNCGSHDFEVVKGRGVYIAGIKIEKEEGE</sequence>
<reference key="1">
    <citation type="journal article" date="2003" name="Mol. Microbiol.">
        <title>An integrated analysis of the genome of the hyperthermophilic archaeon Pyrococcus abyssi.</title>
        <authorList>
            <person name="Cohen G.N."/>
            <person name="Barbe V."/>
            <person name="Flament D."/>
            <person name="Galperin M."/>
            <person name="Heilig R."/>
            <person name="Lecompte O."/>
            <person name="Poch O."/>
            <person name="Prieur D."/>
            <person name="Querellou J."/>
            <person name="Ripp R."/>
            <person name="Thierry J.-C."/>
            <person name="Van der Oost J."/>
            <person name="Weissenbach J."/>
            <person name="Zivanovic Y."/>
            <person name="Forterre P."/>
        </authorList>
    </citation>
    <scope>NUCLEOTIDE SEQUENCE [LARGE SCALE GENOMIC DNA]</scope>
    <source>
        <strain>GE5 / Orsay</strain>
    </source>
</reference>
<reference key="2">
    <citation type="journal article" date="2012" name="Curr. Microbiol.">
        <title>Re-annotation of two hyperthermophilic archaea Pyrococcus abyssi GE5 and Pyrococcus furiosus DSM 3638.</title>
        <authorList>
            <person name="Gao J."/>
            <person name="Wang J."/>
        </authorList>
    </citation>
    <scope>GENOME REANNOTATION</scope>
    <source>
        <strain>GE5 / Orsay</strain>
    </source>
</reference>
<gene>
    <name evidence="1" type="primary">hypA</name>
    <name type="ordered locus">PYRAB05810</name>
    <name type="ORF">PAB0399</name>
</gene>
<protein>
    <recommendedName>
        <fullName evidence="1">Hydrogenase maturation factor HypA</fullName>
    </recommendedName>
</protein>
<evidence type="ECO:0000255" key="1">
    <source>
        <dbReference type="HAMAP-Rule" id="MF_00213"/>
    </source>
</evidence>
<evidence type="ECO:0000305" key="2"/>
<comment type="function">
    <text evidence="1">Involved in the maturation of [NiFe] hydrogenases. Required for nickel insertion into the metal center of the hydrogenase.</text>
</comment>
<comment type="similarity">
    <text evidence="1 2">Belongs to the HypA/HybF family.</text>
</comment>
<dbReference type="EMBL" id="AJ248284">
    <property type="protein sequence ID" value="CAB49503.1"/>
    <property type="molecule type" value="Genomic_DNA"/>
</dbReference>
<dbReference type="EMBL" id="HE613800">
    <property type="protein sequence ID" value="CCE69973.1"/>
    <property type="molecule type" value="Genomic_DNA"/>
</dbReference>
<dbReference type="PIR" id="H75177">
    <property type="entry name" value="H75177"/>
</dbReference>
<dbReference type="RefSeq" id="WP_010867705.1">
    <property type="nucleotide sequence ID" value="NC_000868.1"/>
</dbReference>
<dbReference type="SMR" id="Q9V148"/>
<dbReference type="STRING" id="272844.PAB0399"/>
<dbReference type="KEGG" id="pab:PAB0399"/>
<dbReference type="PATRIC" id="fig|272844.11.peg.619"/>
<dbReference type="eggNOG" id="arCOG04426">
    <property type="taxonomic scope" value="Archaea"/>
</dbReference>
<dbReference type="HOGENOM" id="CLU_126929_2_0_2"/>
<dbReference type="OrthoDB" id="36835at2157"/>
<dbReference type="PhylomeDB" id="Q9V148"/>
<dbReference type="Proteomes" id="UP000000810">
    <property type="component" value="Chromosome"/>
</dbReference>
<dbReference type="Proteomes" id="UP000009139">
    <property type="component" value="Chromosome"/>
</dbReference>
<dbReference type="GO" id="GO:0016151">
    <property type="term" value="F:nickel cation binding"/>
    <property type="evidence" value="ECO:0007669"/>
    <property type="project" value="UniProtKB-UniRule"/>
</dbReference>
<dbReference type="GO" id="GO:0008270">
    <property type="term" value="F:zinc ion binding"/>
    <property type="evidence" value="ECO:0007669"/>
    <property type="project" value="UniProtKB-UniRule"/>
</dbReference>
<dbReference type="GO" id="GO:0051604">
    <property type="term" value="P:protein maturation"/>
    <property type="evidence" value="ECO:0007669"/>
    <property type="project" value="InterPro"/>
</dbReference>
<dbReference type="GO" id="GO:0036211">
    <property type="term" value="P:protein modification process"/>
    <property type="evidence" value="ECO:0007669"/>
    <property type="project" value="UniProtKB-UniRule"/>
</dbReference>
<dbReference type="FunFam" id="3.30.2320.80:FF:000004">
    <property type="entry name" value="Hydrogenase maturation factor HypA"/>
    <property type="match status" value="1"/>
</dbReference>
<dbReference type="Gene3D" id="3.30.2320.80">
    <property type="match status" value="1"/>
</dbReference>
<dbReference type="HAMAP" id="MF_00213">
    <property type="entry name" value="HypA_HybF"/>
    <property type="match status" value="1"/>
</dbReference>
<dbReference type="InterPro" id="IPR020538">
    <property type="entry name" value="Hydgase_Ni_incorp_HypA/HybF_CS"/>
</dbReference>
<dbReference type="InterPro" id="IPR000688">
    <property type="entry name" value="HypA/HybF"/>
</dbReference>
<dbReference type="NCBIfam" id="NF003008">
    <property type="entry name" value="PRK03824.1"/>
    <property type="match status" value="1"/>
</dbReference>
<dbReference type="PANTHER" id="PTHR34535">
    <property type="entry name" value="HYDROGENASE MATURATION FACTOR HYPA"/>
    <property type="match status" value="1"/>
</dbReference>
<dbReference type="PANTHER" id="PTHR34535:SF3">
    <property type="entry name" value="HYDROGENASE MATURATION FACTOR HYPA"/>
    <property type="match status" value="1"/>
</dbReference>
<dbReference type="Pfam" id="PF01155">
    <property type="entry name" value="HypA"/>
    <property type="match status" value="1"/>
</dbReference>
<dbReference type="PIRSF" id="PIRSF004761">
    <property type="entry name" value="Hydrgn_mat_HypA"/>
    <property type="match status" value="1"/>
</dbReference>
<dbReference type="PROSITE" id="PS01249">
    <property type="entry name" value="HYPA"/>
    <property type="match status" value="1"/>
</dbReference>
<accession>Q9V148</accession>
<accession>G8ZJ46</accession>